<organism>
    <name type="scientific">Bacillus licheniformis (strain ATCC 14580 / DSM 13 / JCM 2505 / CCUG 7422 / NBRC 12200 / NCIMB 9375 / NCTC 10341 / NRRL NRS-1264 / Gibson 46)</name>
    <dbReference type="NCBI Taxonomy" id="279010"/>
    <lineage>
        <taxon>Bacteria</taxon>
        <taxon>Bacillati</taxon>
        <taxon>Bacillota</taxon>
        <taxon>Bacilli</taxon>
        <taxon>Bacillales</taxon>
        <taxon>Bacillaceae</taxon>
        <taxon>Bacillus</taxon>
    </lineage>
</organism>
<comment type="function">
    <text evidence="1">Can catalyze the hydrolysis of ATP in the presence of single-stranded DNA, the ATP-dependent uptake of single-stranded DNA by duplex DNA, and the ATP-dependent hybridization of homologous single-stranded DNAs. It interacts with LexA causing its activation and leading to its autocatalytic cleavage.</text>
</comment>
<comment type="subcellular location">
    <subcellularLocation>
        <location evidence="1">Cytoplasm</location>
    </subcellularLocation>
</comment>
<comment type="similarity">
    <text evidence="1">Belongs to the RecA family.</text>
</comment>
<evidence type="ECO:0000255" key="1">
    <source>
        <dbReference type="HAMAP-Rule" id="MF_00268"/>
    </source>
</evidence>
<evidence type="ECO:0000256" key="2">
    <source>
        <dbReference type="SAM" id="MobiDB-lite"/>
    </source>
</evidence>
<name>RECA_BACLD</name>
<accession>Q65JF2</accession>
<accession>Q62UV7</accession>
<keyword id="KW-0067">ATP-binding</keyword>
<keyword id="KW-0963">Cytoplasm</keyword>
<keyword id="KW-0227">DNA damage</keyword>
<keyword id="KW-0233">DNA recombination</keyword>
<keyword id="KW-0234">DNA repair</keyword>
<keyword id="KW-0238">DNA-binding</keyword>
<keyword id="KW-0547">Nucleotide-binding</keyword>
<keyword id="KW-1185">Reference proteome</keyword>
<keyword id="KW-0742">SOS response</keyword>
<protein>
    <recommendedName>
        <fullName evidence="1">Protein RecA</fullName>
    </recommendedName>
    <alternativeName>
        <fullName evidence="1">Recombinase A</fullName>
    </alternativeName>
</protein>
<sequence length="348" mass="37735">MSDRQAALDMALKQIEKQFGKGSIMKLGEQTETRISTVPSGSLALDAALGVGGYPRGRIIEVYGPESSGKTTVALHAIAEVQQQGGQAAFIDAEHALDPVYAQKLGVNIDELLLSQPDTGEQALEIAEALVRSGAVDIVVIDSVAALVPKAEIEGDMGDSHVGLQARLMSQALRKLSGAINKSKTIAIFINQIREKVGVMFGNPETTPGGRALKFYSSVRLEVRRAEQLKQGNDVMGNKTKIKVVKNKVAPPFRTAEVDIMYGEGISKEGEIIDLGTELDIVQKSGAWYSYQEERLGQGRENAKQFLKENKDILLMIQEQIREHYGLDTGGAAPAQEDEAQAQEELEF</sequence>
<gene>
    <name evidence="1" type="primary">recA</name>
    <name type="ordered locus">BLi01918</name>
    <name type="ordered locus">BL05164</name>
</gene>
<proteinExistence type="inferred from homology"/>
<dbReference type="EMBL" id="AE017333">
    <property type="protein sequence ID" value="AAU40812.1"/>
    <property type="molecule type" value="Genomic_DNA"/>
</dbReference>
<dbReference type="EMBL" id="CP000002">
    <property type="protein sequence ID" value="AAU23452.1"/>
    <property type="molecule type" value="Genomic_DNA"/>
</dbReference>
<dbReference type="RefSeq" id="WP_003181926.1">
    <property type="nucleotide sequence ID" value="NC_006322.1"/>
</dbReference>
<dbReference type="SMR" id="Q65JF2"/>
<dbReference type="STRING" id="279010.BL05164"/>
<dbReference type="GeneID" id="92861490"/>
<dbReference type="KEGG" id="bld:BLi01918"/>
<dbReference type="KEGG" id="bli:BL05164"/>
<dbReference type="eggNOG" id="COG0468">
    <property type="taxonomic scope" value="Bacteria"/>
</dbReference>
<dbReference type="HOGENOM" id="CLU_040469_1_2_9"/>
<dbReference type="Proteomes" id="UP000000606">
    <property type="component" value="Chromosome"/>
</dbReference>
<dbReference type="GO" id="GO:0005829">
    <property type="term" value="C:cytosol"/>
    <property type="evidence" value="ECO:0007669"/>
    <property type="project" value="TreeGrafter"/>
</dbReference>
<dbReference type="GO" id="GO:0005524">
    <property type="term" value="F:ATP binding"/>
    <property type="evidence" value="ECO:0007669"/>
    <property type="project" value="UniProtKB-UniRule"/>
</dbReference>
<dbReference type="GO" id="GO:0016887">
    <property type="term" value="F:ATP hydrolysis activity"/>
    <property type="evidence" value="ECO:0007669"/>
    <property type="project" value="InterPro"/>
</dbReference>
<dbReference type="GO" id="GO:0140664">
    <property type="term" value="F:ATP-dependent DNA damage sensor activity"/>
    <property type="evidence" value="ECO:0007669"/>
    <property type="project" value="InterPro"/>
</dbReference>
<dbReference type="GO" id="GO:0003684">
    <property type="term" value="F:damaged DNA binding"/>
    <property type="evidence" value="ECO:0007669"/>
    <property type="project" value="UniProtKB-UniRule"/>
</dbReference>
<dbReference type="GO" id="GO:0003697">
    <property type="term" value="F:single-stranded DNA binding"/>
    <property type="evidence" value="ECO:0007669"/>
    <property type="project" value="UniProtKB-UniRule"/>
</dbReference>
<dbReference type="GO" id="GO:0006310">
    <property type="term" value="P:DNA recombination"/>
    <property type="evidence" value="ECO:0007669"/>
    <property type="project" value="UniProtKB-UniRule"/>
</dbReference>
<dbReference type="GO" id="GO:0006281">
    <property type="term" value="P:DNA repair"/>
    <property type="evidence" value="ECO:0007669"/>
    <property type="project" value="UniProtKB-UniRule"/>
</dbReference>
<dbReference type="GO" id="GO:0009432">
    <property type="term" value="P:SOS response"/>
    <property type="evidence" value="ECO:0007669"/>
    <property type="project" value="UniProtKB-UniRule"/>
</dbReference>
<dbReference type="CDD" id="cd00983">
    <property type="entry name" value="RecA"/>
    <property type="match status" value="1"/>
</dbReference>
<dbReference type="FunFam" id="3.40.50.300:FF:000087">
    <property type="entry name" value="Recombinase RecA"/>
    <property type="match status" value="1"/>
</dbReference>
<dbReference type="Gene3D" id="3.40.50.300">
    <property type="entry name" value="P-loop containing nucleotide triphosphate hydrolases"/>
    <property type="match status" value="1"/>
</dbReference>
<dbReference type="HAMAP" id="MF_00268">
    <property type="entry name" value="RecA"/>
    <property type="match status" value="1"/>
</dbReference>
<dbReference type="InterPro" id="IPR003593">
    <property type="entry name" value="AAA+_ATPase"/>
</dbReference>
<dbReference type="InterPro" id="IPR013765">
    <property type="entry name" value="DNA_recomb/repair_RecA"/>
</dbReference>
<dbReference type="InterPro" id="IPR020584">
    <property type="entry name" value="DNA_recomb/repair_RecA_CS"/>
</dbReference>
<dbReference type="InterPro" id="IPR027417">
    <property type="entry name" value="P-loop_NTPase"/>
</dbReference>
<dbReference type="InterPro" id="IPR049261">
    <property type="entry name" value="RecA-like_C"/>
</dbReference>
<dbReference type="InterPro" id="IPR049428">
    <property type="entry name" value="RecA-like_N"/>
</dbReference>
<dbReference type="InterPro" id="IPR020588">
    <property type="entry name" value="RecA_ATP-bd"/>
</dbReference>
<dbReference type="InterPro" id="IPR023400">
    <property type="entry name" value="RecA_C_sf"/>
</dbReference>
<dbReference type="InterPro" id="IPR020587">
    <property type="entry name" value="RecA_monomer-monomer_interface"/>
</dbReference>
<dbReference type="NCBIfam" id="TIGR02012">
    <property type="entry name" value="tigrfam_recA"/>
    <property type="match status" value="1"/>
</dbReference>
<dbReference type="PANTHER" id="PTHR45900:SF1">
    <property type="entry name" value="MITOCHONDRIAL DNA REPAIR PROTEIN RECA HOMOLOG-RELATED"/>
    <property type="match status" value="1"/>
</dbReference>
<dbReference type="PANTHER" id="PTHR45900">
    <property type="entry name" value="RECA"/>
    <property type="match status" value="1"/>
</dbReference>
<dbReference type="Pfam" id="PF00154">
    <property type="entry name" value="RecA"/>
    <property type="match status" value="1"/>
</dbReference>
<dbReference type="Pfam" id="PF21096">
    <property type="entry name" value="RecA_C"/>
    <property type="match status" value="1"/>
</dbReference>
<dbReference type="PRINTS" id="PR00142">
    <property type="entry name" value="RECA"/>
</dbReference>
<dbReference type="SMART" id="SM00382">
    <property type="entry name" value="AAA"/>
    <property type="match status" value="1"/>
</dbReference>
<dbReference type="SUPFAM" id="SSF52540">
    <property type="entry name" value="P-loop containing nucleoside triphosphate hydrolases"/>
    <property type="match status" value="1"/>
</dbReference>
<dbReference type="SUPFAM" id="SSF54752">
    <property type="entry name" value="RecA protein, C-terminal domain"/>
    <property type="match status" value="1"/>
</dbReference>
<dbReference type="PROSITE" id="PS00321">
    <property type="entry name" value="RECA_1"/>
    <property type="match status" value="1"/>
</dbReference>
<dbReference type="PROSITE" id="PS50162">
    <property type="entry name" value="RECA_2"/>
    <property type="match status" value="1"/>
</dbReference>
<dbReference type="PROSITE" id="PS50163">
    <property type="entry name" value="RECA_3"/>
    <property type="match status" value="1"/>
</dbReference>
<feature type="chain" id="PRO_0000122654" description="Protein RecA">
    <location>
        <begin position="1"/>
        <end position="348"/>
    </location>
</feature>
<feature type="region of interest" description="Disordered" evidence="2">
    <location>
        <begin position="328"/>
        <end position="348"/>
    </location>
</feature>
<feature type="compositionally biased region" description="Acidic residues" evidence="2">
    <location>
        <begin position="336"/>
        <end position="348"/>
    </location>
</feature>
<feature type="binding site" evidence="1">
    <location>
        <begin position="64"/>
        <end position="71"/>
    </location>
    <ligand>
        <name>ATP</name>
        <dbReference type="ChEBI" id="CHEBI:30616"/>
    </ligand>
</feature>
<reference key="1">
    <citation type="journal article" date="2004" name="J. Mol. Microbiol. Biotechnol.">
        <title>The complete genome sequence of Bacillus licheniformis DSM13, an organism with great industrial potential.</title>
        <authorList>
            <person name="Veith B."/>
            <person name="Herzberg C."/>
            <person name="Steckel S."/>
            <person name="Feesche J."/>
            <person name="Maurer K.H."/>
            <person name="Ehrenreich P."/>
            <person name="Baeumer S."/>
            <person name="Henne A."/>
            <person name="Liesegang H."/>
            <person name="Merkl R."/>
            <person name="Ehrenreich A."/>
            <person name="Gottschalk G."/>
        </authorList>
    </citation>
    <scope>NUCLEOTIDE SEQUENCE [LARGE SCALE GENOMIC DNA]</scope>
    <source>
        <strain>ATCC 14580 / DSM 13 / JCM 2505 / CCUG 7422 / NBRC 12200 / NCIMB 9375 / NCTC 10341 / NRRL NRS-1264 / Gibson 46</strain>
    </source>
</reference>
<reference key="2">
    <citation type="journal article" date="2004" name="Genome Biol.">
        <title>Complete genome sequence of the industrial bacterium Bacillus licheniformis and comparisons with closely related Bacillus species.</title>
        <authorList>
            <person name="Rey M.W."/>
            <person name="Ramaiya P."/>
            <person name="Nelson B.A."/>
            <person name="Brody-Karpin S.D."/>
            <person name="Zaretsky E.J."/>
            <person name="Tang M."/>
            <person name="Lopez de Leon A."/>
            <person name="Xiang H."/>
            <person name="Gusti V."/>
            <person name="Clausen I.G."/>
            <person name="Olsen P.B."/>
            <person name="Rasmussen M.D."/>
            <person name="Andersen J.T."/>
            <person name="Joergensen P.L."/>
            <person name="Larsen T.S."/>
            <person name="Sorokin A."/>
            <person name="Bolotin A."/>
            <person name="Lapidus A."/>
            <person name="Galleron N."/>
            <person name="Ehrlich S.D."/>
            <person name="Berka R.M."/>
        </authorList>
    </citation>
    <scope>NUCLEOTIDE SEQUENCE [LARGE SCALE GENOMIC DNA]</scope>
    <source>
        <strain>ATCC 14580 / DSM 13 / JCM 2505 / CCUG 7422 / NBRC 12200 / NCIMB 9375 / NCTC 10341 / NRRL NRS-1264 / Gibson 46</strain>
    </source>
</reference>